<gene>
    <name evidence="1" type="primary">ureD</name>
    <name type="ordered locus">YPTB2938</name>
</gene>
<name>URED_YERPS</name>
<keyword id="KW-0143">Chaperone</keyword>
<keyword id="KW-0963">Cytoplasm</keyword>
<keyword id="KW-0996">Nickel insertion</keyword>
<accession>P52316</accession>
<accession>Q667Q4</accession>
<dbReference type="EMBL" id="U40842">
    <property type="protein sequence ID" value="AAA87858.2"/>
    <property type="molecule type" value="Genomic_DNA"/>
</dbReference>
<dbReference type="EMBL" id="BX936398">
    <property type="protein sequence ID" value="CAH22176.1"/>
    <property type="molecule type" value="Genomic_DNA"/>
</dbReference>
<dbReference type="RefSeq" id="WP_011192842.1">
    <property type="nucleotide sequence ID" value="NC_006155.1"/>
</dbReference>
<dbReference type="SMR" id="P52316"/>
<dbReference type="GeneID" id="49785050"/>
<dbReference type="KEGG" id="ypo:BZ17_3690"/>
<dbReference type="KEGG" id="yps:YPTB2938"/>
<dbReference type="PATRIC" id="fig|273123.14.peg.3868"/>
<dbReference type="Proteomes" id="UP000001011">
    <property type="component" value="Chromosome"/>
</dbReference>
<dbReference type="GO" id="GO:0005737">
    <property type="term" value="C:cytoplasm"/>
    <property type="evidence" value="ECO:0007669"/>
    <property type="project" value="UniProtKB-SubCell"/>
</dbReference>
<dbReference type="GO" id="GO:0016151">
    <property type="term" value="F:nickel cation binding"/>
    <property type="evidence" value="ECO:0007669"/>
    <property type="project" value="UniProtKB-UniRule"/>
</dbReference>
<dbReference type="HAMAP" id="MF_01384">
    <property type="entry name" value="UreD"/>
    <property type="match status" value="1"/>
</dbReference>
<dbReference type="InterPro" id="IPR002669">
    <property type="entry name" value="UreD"/>
</dbReference>
<dbReference type="PANTHER" id="PTHR33643">
    <property type="entry name" value="UREASE ACCESSORY PROTEIN D"/>
    <property type="match status" value="1"/>
</dbReference>
<dbReference type="PANTHER" id="PTHR33643:SF1">
    <property type="entry name" value="UREASE ACCESSORY PROTEIN D"/>
    <property type="match status" value="1"/>
</dbReference>
<dbReference type="Pfam" id="PF01774">
    <property type="entry name" value="UreD"/>
    <property type="match status" value="1"/>
</dbReference>
<protein>
    <recommendedName>
        <fullName evidence="1">Urease accessory protein UreD</fullName>
    </recommendedName>
</protein>
<organism>
    <name type="scientific">Yersinia pseudotuberculosis serotype I (strain IP32953)</name>
    <dbReference type="NCBI Taxonomy" id="273123"/>
    <lineage>
        <taxon>Bacteria</taxon>
        <taxon>Pseudomonadati</taxon>
        <taxon>Pseudomonadota</taxon>
        <taxon>Gammaproteobacteria</taxon>
        <taxon>Enterobacterales</taxon>
        <taxon>Yersiniaceae</taxon>
        <taxon>Yersinia</taxon>
    </lineage>
</organism>
<proteinExistence type="inferred from homology"/>
<evidence type="ECO:0000255" key="1">
    <source>
        <dbReference type="HAMAP-Rule" id="MF_01384"/>
    </source>
</evidence>
<comment type="function">
    <text evidence="1">Required for maturation of urease via the functional incorporation of the urease nickel metallocenter.</text>
</comment>
<comment type="subunit">
    <text evidence="1">UreD, UreF and UreG form a complex that acts as a GTP-hydrolysis-dependent molecular chaperone, activating the urease apoprotein by helping to assemble the nickel containing metallocenter of UreC. The UreE protein probably delivers the nickel.</text>
</comment>
<comment type="subcellular location">
    <subcellularLocation>
        <location evidence="1">Cytoplasm</location>
    </subcellularLocation>
</comment>
<comment type="similarity">
    <text evidence="1">Belongs to the UreD family.</text>
</comment>
<reference key="1">
    <citation type="journal article" date="1997" name="Infect. Immun.">
        <title>Urease is not involved in the virulence of Yersinia pseudotuberculosis in mice.</title>
        <authorList>
            <person name="Riot B."/>
            <person name="Berche P."/>
            <person name="Simonet M."/>
        </authorList>
    </citation>
    <scope>NUCLEOTIDE SEQUENCE [GENOMIC DNA]</scope>
    <source>
        <strain>IP 2777</strain>
    </source>
</reference>
<reference key="2">
    <citation type="submission" date="1999-12" db="EMBL/GenBank/DDBJ databases">
        <authorList>
            <person name="Riot B."/>
        </authorList>
    </citation>
    <scope>SEQUENCE REVISION TO C-TERMINUS</scope>
</reference>
<reference key="3">
    <citation type="journal article" date="2004" name="Proc. Natl. Acad. Sci. U.S.A.">
        <title>Insights into the evolution of Yersinia pestis through whole-genome comparison with Yersinia pseudotuberculosis.</title>
        <authorList>
            <person name="Chain P.S.G."/>
            <person name="Carniel E."/>
            <person name="Larimer F.W."/>
            <person name="Lamerdin J."/>
            <person name="Stoutland P.O."/>
            <person name="Regala W.M."/>
            <person name="Georgescu A.M."/>
            <person name="Vergez L.M."/>
            <person name="Land M.L."/>
            <person name="Motin V.L."/>
            <person name="Brubaker R.R."/>
            <person name="Fowler J."/>
            <person name="Hinnebusch J."/>
            <person name="Marceau M."/>
            <person name="Medigue C."/>
            <person name="Simonet M."/>
            <person name="Chenal-Francisque V."/>
            <person name="Souza B."/>
            <person name="Dacheux D."/>
            <person name="Elliott J.M."/>
            <person name="Derbise A."/>
            <person name="Hauser L.J."/>
            <person name="Garcia E."/>
        </authorList>
    </citation>
    <scope>NUCLEOTIDE SEQUENCE [LARGE SCALE GENOMIC DNA]</scope>
    <source>
        <strain>IP32953</strain>
    </source>
</reference>
<feature type="chain" id="PRO_0000067622" description="Urease accessory protein UreD">
    <location>
        <begin position="1"/>
        <end position="321"/>
    </location>
</feature>
<sequence>MTAQSQNIVETPSRVRAHALGVNAPELAKYQDEPAQMRSGAVGKSGYLKLRFAKREHRSILAEMERRVPSLVQKALYWDEEIPELPCVTMISTSGCILQGDRLATDVHVEAGACAHVTTQSATKVHMMNANYASQIQNFIVEEGGYLEFMPDPLIPHRNSRFITDTTISIHPTATAIYSEVLMSGRKYHHADERFGFDVYSSRVAAQNLAGKELFVEKYVLEPKVESLDAVGVMQTFDAFGNVILLTPKEHHDRILARVPAHFDIKGGIASGATRLPNDCGLVFKALGIDSAGVKAEIRQFWKIAREEILGVTLPEQFLWR</sequence>